<organism>
    <name type="scientific">Prunus mume</name>
    <name type="common">Japanese apricot</name>
    <name type="synonym">Armeniaca mume</name>
    <dbReference type="NCBI Taxonomy" id="102107"/>
    <lineage>
        <taxon>Eukaryota</taxon>
        <taxon>Viridiplantae</taxon>
        <taxon>Streptophyta</taxon>
        <taxon>Embryophyta</taxon>
        <taxon>Tracheophyta</taxon>
        <taxon>Spermatophyta</taxon>
        <taxon>Magnoliopsida</taxon>
        <taxon>eudicotyledons</taxon>
        <taxon>Gunneridae</taxon>
        <taxon>Pentapetalae</taxon>
        <taxon>rosids</taxon>
        <taxon>fabids</taxon>
        <taxon>Rosales</taxon>
        <taxon>Rosaceae</taxon>
        <taxon>Amygdaloideae</taxon>
        <taxon>Amygdaleae</taxon>
        <taxon>Prunus</taxon>
    </lineage>
</organism>
<proteinExistence type="evidence at protein level"/>
<comment type="function">
    <text evidence="4">Involved in L-phenylalanine-derived cyanogenic glycoside biosynthesis, including prunasin and amygdalin defensive agents (PubMed:25015725). Catalyzes the conversion of L-phenylalanine (Phe) into phenylacetaldoxime (PAOx) (PubMed:25015725). Cannot use tyrosine (Tyr), tryptophan (Trp) and valine (Val) as substrates (PubMed:25015725).</text>
</comment>
<comment type="catalytic activity">
    <reaction evidence="4">
        <text>L-phenylalanine + 2 reduced [NADPH--hemoprotein reductase] + 2 O2 = (E)-phenylacetaldehyde oxime + 2 oxidized [NADPH--hemoprotein reductase] + CO2 + 3 H2O + 2 H(+)</text>
        <dbReference type="Rhea" id="RHEA:33263"/>
        <dbReference type="Rhea" id="RHEA-COMP:11964"/>
        <dbReference type="Rhea" id="RHEA-COMP:11965"/>
        <dbReference type="ChEBI" id="CHEBI:15377"/>
        <dbReference type="ChEBI" id="CHEBI:15378"/>
        <dbReference type="ChEBI" id="CHEBI:15379"/>
        <dbReference type="ChEBI" id="CHEBI:16526"/>
        <dbReference type="ChEBI" id="CHEBI:47793"/>
        <dbReference type="ChEBI" id="CHEBI:57618"/>
        <dbReference type="ChEBI" id="CHEBI:58095"/>
        <dbReference type="ChEBI" id="CHEBI:58210"/>
        <dbReference type="EC" id="1.14.14.40"/>
    </reaction>
</comment>
<comment type="cofactor">
    <cofactor evidence="1">
        <name>heme</name>
        <dbReference type="ChEBI" id="CHEBI:30413"/>
    </cofactor>
</comment>
<comment type="tissue specificity">
    <text evidence="4">Expressed in seedlings.</text>
</comment>
<comment type="similarity">
    <text evidence="6">Belongs to the cytochrome P450 family.</text>
</comment>
<accession>A0A068Q7V0</accession>
<reference key="1">
    <citation type="journal article" date="2014" name="Plant Mol. Biol.">
        <title>Identification and characterization of CYP79D16 and CYP71AN24 catalyzing the first and second steps in L-phenylalanine-derived cyanogenic glycoside biosynthesis in the Japanese apricot, Prunus mume Sieb. et Zucc.</title>
        <authorList>
            <person name="Yamaguchi T."/>
            <person name="Yamamoto K."/>
            <person name="Asano Y."/>
        </authorList>
    </citation>
    <scope>NUCLEOTIDE SEQUENCE [MRNA]</scope>
    <scope>FUNCTION</scope>
    <scope>CATALYTIC ACTIVITY</scope>
    <scope>TISSUE SPECIFICITY</scope>
    <source>
        <strain>cv. Nanko</strain>
        <tissue>Seedling</tissue>
    </source>
</reference>
<protein>
    <recommendedName>
        <fullName evidence="5">Phenylalanine N-monooxygenase CYP79D16</fullName>
        <ecNumber evidence="4">1.14.14.40</ecNumber>
    </recommendedName>
    <alternativeName>
        <fullName evidence="5">Cytochrome P450 79D16</fullName>
    </alternativeName>
</protein>
<dbReference type="EC" id="1.14.14.40" evidence="4"/>
<dbReference type="EMBL" id="AB920488">
    <property type="protein sequence ID" value="BAP15884.1"/>
    <property type="molecule type" value="mRNA"/>
</dbReference>
<dbReference type="RefSeq" id="NP_001313435.1">
    <property type="nucleotide sequence ID" value="NM_001326506.1"/>
</dbReference>
<dbReference type="SMR" id="A0A068Q7V0"/>
<dbReference type="GlyCosmos" id="A0A068Q7V0">
    <property type="glycosylation" value="1 site, No reported glycans"/>
</dbReference>
<dbReference type="GeneID" id="103330459"/>
<dbReference type="BioCyc" id="MetaCyc:MONOMER-20058"/>
<dbReference type="BRENDA" id="1.14.14.40">
    <property type="organism ID" value="8044"/>
</dbReference>
<dbReference type="Proteomes" id="UP000694861">
    <property type="component" value="Unplaced"/>
</dbReference>
<dbReference type="GO" id="GO:0020037">
    <property type="term" value="F:heme binding"/>
    <property type="evidence" value="ECO:0007669"/>
    <property type="project" value="InterPro"/>
</dbReference>
<dbReference type="GO" id="GO:0005506">
    <property type="term" value="F:iron ion binding"/>
    <property type="evidence" value="ECO:0007669"/>
    <property type="project" value="InterPro"/>
</dbReference>
<dbReference type="GO" id="GO:0102684">
    <property type="term" value="F:L-phenylalanine N-monooxygenase activity"/>
    <property type="evidence" value="ECO:0007669"/>
    <property type="project" value="UniProtKB-EC"/>
</dbReference>
<dbReference type="GO" id="GO:0044550">
    <property type="term" value="P:secondary metabolite biosynthetic process"/>
    <property type="evidence" value="ECO:0007669"/>
    <property type="project" value="UniProtKB-ARBA"/>
</dbReference>
<dbReference type="FunFam" id="1.10.630.10:FF:000037">
    <property type="entry name" value="Cytochrome P450 9"/>
    <property type="match status" value="1"/>
</dbReference>
<dbReference type="Gene3D" id="1.10.630.10">
    <property type="entry name" value="Cytochrome P450"/>
    <property type="match status" value="1"/>
</dbReference>
<dbReference type="InterPro" id="IPR001128">
    <property type="entry name" value="Cyt_P450"/>
</dbReference>
<dbReference type="InterPro" id="IPR017972">
    <property type="entry name" value="Cyt_P450_CS"/>
</dbReference>
<dbReference type="InterPro" id="IPR002401">
    <property type="entry name" value="Cyt_P450_E_grp-I"/>
</dbReference>
<dbReference type="InterPro" id="IPR036396">
    <property type="entry name" value="Cyt_P450_sf"/>
</dbReference>
<dbReference type="PANTHER" id="PTHR47944">
    <property type="entry name" value="CYTOCHROME P450 98A9"/>
    <property type="match status" value="1"/>
</dbReference>
<dbReference type="PANTHER" id="PTHR47944:SF4">
    <property type="entry name" value="OS09G0441700 PROTEIN"/>
    <property type="match status" value="1"/>
</dbReference>
<dbReference type="Pfam" id="PF00067">
    <property type="entry name" value="p450"/>
    <property type="match status" value="1"/>
</dbReference>
<dbReference type="PRINTS" id="PR00463">
    <property type="entry name" value="EP450I"/>
</dbReference>
<dbReference type="SUPFAM" id="SSF48264">
    <property type="entry name" value="Cytochrome P450"/>
    <property type="match status" value="1"/>
</dbReference>
<dbReference type="PROSITE" id="PS00086">
    <property type="entry name" value="CYTOCHROME_P450"/>
    <property type="match status" value="1"/>
</dbReference>
<sequence length="534" mass="60796">MEANVGFLTLCLAITLVRFLMKRYWHQSKINDKNNKAIKQHYPLPPTPKGLRPWPIVGNLPEMLMNKPTFRWIHKLMEESNTQIACIRLANVHVTPVSCPILSREILKKQDATFATRPLSISTFLITKGYITTVMVPFGEQWKKMRKVITSELLSPMRHKWLTDKRIEEADHLVRYVFNQCNNDEGSGIVDLRLATQHYCANVIKRMIFNQRYFTEEMKDGGPSVEEQNYVNAVFDMLRYIYAFSASDYISCLRGLDLDGHEKIIKDCIKLTRKRQDPVIEERIREHQKLGGNKVPVDLLDILISLKDASGQPLLSTDEIKGQVNEMIMAAVDNPSNAAEWAIAEMINQPHLFEKARQELDAVVGKERQVQESDLSQLNFVKACAREAFRLHPVAPFNVPHVSMADTTVGDYFIPKGSHVMLSRIGLGRNPKIWDEPLKYKPERHLKDDGSGVVLTESELRFISFSTGMRGCVASTLGTSMTVMLFARLLHGFTWEAPPNESRIDLTEADGELLLAKPLFALAKPRLPAHVYQT</sequence>
<evidence type="ECO:0000250" key="1">
    <source>
        <dbReference type="UniProtKB" id="P04798"/>
    </source>
</evidence>
<evidence type="ECO:0000255" key="2"/>
<evidence type="ECO:0000255" key="3">
    <source>
        <dbReference type="PROSITE-ProRule" id="PRU00498"/>
    </source>
</evidence>
<evidence type="ECO:0000269" key="4">
    <source>
    </source>
</evidence>
<evidence type="ECO:0000303" key="5">
    <source>
    </source>
</evidence>
<evidence type="ECO:0000305" key="6"/>
<name>C7916_PRUMU</name>
<keyword id="KW-0325">Glycoprotein</keyword>
<keyword id="KW-0349">Heme</keyword>
<keyword id="KW-0408">Iron</keyword>
<keyword id="KW-0479">Metal-binding</keyword>
<keyword id="KW-0503">Monooxygenase</keyword>
<keyword id="KW-0560">Oxidoreductase</keyword>
<keyword id="KW-0732">Signal</keyword>
<gene>
    <name evidence="5" type="primary">CYP79D16</name>
</gene>
<feature type="signal peptide" evidence="2">
    <location>
        <begin position="1"/>
        <end position="21"/>
    </location>
</feature>
<feature type="chain" id="PRO_0000449232" description="Phenylalanine N-monooxygenase CYP79D16">
    <location>
        <begin position="22"/>
        <end position="534"/>
    </location>
</feature>
<feature type="binding site" description="axial binding residue" evidence="1">
    <location>
        <position position="472"/>
    </location>
    <ligand>
        <name>heme</name>
        <dbReference type="ChEBI" id="CHEBI:30413"/>
    </ligand>
    <ligandPart>
        <name>Fe</name>
        <dbReference type="ChEBI" id="CHEBI:18248"/>
    </ligandPart>
</feature>
<feature type="glycosylation site" description="N-linked (GlcNAc...) asparagine" evidence="3">
    <location>
        <position position="500"/>
    </location>
</feature>